<name>SELA_HYPNA</name>
<organism>
    <name type="scientific">Hyphomonas neptunium (strain ATCC 15444)</name>
    <dbReference type="NCBI Taxonomy" id="228405"/>
    <lineage>
        <taxon>Bacteria</taxon>
        <taxon>Pseudomonadati</taxon>
        <taxon>Pseudomonadota</taxon>
        <taxon>Alphaproteobacteria</taxon>
        <taxon>Hyphomonadales</taxon>
        <taxon>Hyphomonadaceae</taxon>
        <taxon>Hyphomonas</taxon>
    </lineage>
</organism>
<sequence>MGNLLRHLPQLDALLSTAAMASLLERYSREEVADALRAALQEVRKGVQAGHMDSLPDFESAGFVSGVMAGIEARRRPNLVAAINATGIIIHTNLGRARLAPEAMAAVQAAGAHASNLELDLATGRRGSRYAHVEALICELTGAEAALVVNNCAAAVLLSLMATAQGRKVIASRGELIEIGGSFRLPDVIQQSGATLKEVGATNKTRASDYAQAIDAETAVLLKSHTSNYQIVGFTHAPQREELASLARETGTILMEDLGSGVLVDLSPYGLNDEPVVSDVLKSGVDVVMFSGDKLLGGPQCGIIAGRADIIVSLKKHPLCRAVRIDKLSLAALEATLRLYRAPHDPFQKVPVLRAISQPVEEIEARARRLAGELTVAGIVDVMCIPSRAYVGGGSLPQQNLESCAVTVIVPHLSPDALAAALRAARPPVIGMIREDRFVMDVRTLIDGDLPGIVEAFRQVALR</sequence>
<accession>Q0BZB0</accession>
<keyword id="KW-0963">Cytoplasm</keyword>
<keyword id="KW-0648">Protein biosynthesis</keyword>
<keyword id="KW-0663">Pyridoxal phosphate</keyword>
<keyword id="KW-1185">Reference proteome</keyword>
<keyword id="KW-0711">Selenium</keyword>
<keyword id="KW-0808">Transferase</keyword>
<gene>
    <name evidence="1" type="primary">selA</name>
    <name type="ordered locus">HNE_2489</name>
</gene>
<feature type="chain" id="PRO_1000050369" description="L-seryl-tRNA(Sec) selenium transferase">
    <location>
        <begin position="1"/>
        <end position="463"/>
    </location>
</feature>
<feature type="modified residue" description="N6-(pyridoxal phosphate)lysine" evidence="1">
    <location>
        <position position="294"/>
    </location>
</feature>
<evidence type="ECO:0000255" key="1">
    <source>
        <dbReference type="HAMAP-Rule" id="MF_00423"/>
    </source>
</evidence>
<dbReference type="EC" id="2.9.1.1" evidence="1"/>
<dbReference type="EMBL" id="CP000158">
    <property type="protein sequence ID" value="ABI76187.1"/>
    <property type="molecule type" value="Genomic_DNA"/>
</dbReference>
<dbReference type="SMR" id="Q0BZB0"/>
<dbReference type="STRING" id="228405.HNE_2489"/>
<dbReference type="KEGG" id="hne:HNE_2489"/>
<dbReference type="eggNOG" id="COG1921">
    <property type="taxonomic scope" value="Bacteria"/>
</dbReference>
<dbReference type="HOGENOM" id="CLU_038142_1_0_5"/>
<dbReference type="UniPathway" id="UPA00906">
    <property type="reaction ID" value="UER00896"/>
</dbReference>
<dbReference type="Proteomes" id="UP000001959">
    <property type="component" value="Chromosome"/>
</dbReference>
<dbReference type="GO" id="GO:0005737">
    <property type="term" value="C:cytoplasm"/>
    <property type="evidence" value="ECO:0007669"/>
    <property type="project" value="UniProtKB-SubCell"/>
</dbReference>
<dbReference type="GO" id="GO:0004125">
    <property type="term" value="F:L-seryl-tRNA(Sec) selenium transferase activity"/>
    <property type="evidence" value="ECO:0007669"/>
    <property type="project" value="UniProtKB-UniRule"/>
</dbReference>
<dbReference type="GO" id="GO:0001717">
    <property type="term" value="P:conversion of seryl-tRNAsec to selenocys-tRNAsec"/>
    <property type="evidence" value="ECO:0007669"/>
    <property type="project" value="UniProtKB-UniRule"/>
</dbReference>
<dbReference type="GO" id="GO:0001514">
    <property type="term" value="P:selenocysteine incorporation"/>
    <property type="evidence" value="ECO:0007669"/>
    <property type="project" value="UniProtKB-UniRule"/>
</dbReference>
<dbReference type="Gene3D" id="3.90.1150.180">
    <property type="match status" value="1"/>
</dbReference>
<dbReference type="Gene3D" id="3.40.640.10">
    <property type="entry name" value="Type I PLP-dependent aspartate aminotransferase-like (Major domain)"/>
    <property type="match status" value="1"/>
</dbReference>
<dbReference type="HAMAP" id="MF_00423">
    <property type="entry name" value="SelA"/>
    <property type="match status" value="1"/>
</dbReference>
<dbReference type="InterPro" id="IPR015424">
    <property type="entry name" value="PyrdxlP-dep_Trfase"/>
</dbReference>
<dbReference type="InterPro" id="IPR015421">
    <property type="entry name" value="PyrdxlP-dep_Trfase_major"/>
</dbReference>
<dbReference type="InterPro" id="IPR018319">
    <property type="entry name" value="SelA-like"/>
</dbReference>
<dbReference type="InterPro" id="IPR004534">
    <property type="entry name" value="SelA_trans"/>
</dbReference>
<dbReference type="InterPro" id="IPR025862">
    <property type="entry name" value="SelA_trans_N_dom"/>
</dbReference>
<dbReference type="NCBIfam" id="TIGR00474">
    <property type="entry name" value="selA"/>
    <property type="match status" value="1"/>
</dbReference>
<dbReference type="PANTHER" id="PTHR32328">
    <property type="entry name" value="L-SERYL-TRNA(SEC) SELENIUM TRANSFERASE"/>
    <property type="match status" value="1"/>
</dbReference>
<dbReference type="PANTHER" id="PTHR32328:SF0">
    <property type="entry name" value="L-SERYL-TRNA(SEC) SELENIUM TRANSFERASE"/>
    <property type="match status" value="1"/>
</dbReference>
<dbReference type="Pfam" id="PF12390">
    <property type="entry name" value="Se-cys_synth_N"/>
    <property type="match status" value="1"/>
</dbReference>
<dbReference type="Pfam" id="PF03841">
    <property type="entry name" value="SelA"/>
    <property type="match status" value="1"/>
</dbReference>
<dbReference type="SUPFAM" id="SSF53383">
    <property type="entry name" value="PLP-dependent transferases"/>
    <property type="match status" value="1"/>
</dbReference>
<comment type="function">
    <text evidence="1">Converts seryl-tRNA(Sec) to selenocysteinyl-tRNA(Sec) required for selenoprotein biosynthesis.</text>
</comment>
<comment type="catalytic activity">
    <reaction evidence="1">
        <text>L-seryl-tRNA(Sec) + selenophosphate + H(+) = L-selenocysteinyl-tRNA(Sec) + phosphate</text>
        <dbReference type="Rhea" id="RHEA:22728"/>
        <dbReference type="Rhea" id="RHEA-COMP:9742"/>
        <dbReference type="Rhea" id="RHEA-COMP:9743"/>
        <dbReference type="ChEBI" id="CHEBI:15378"/>
        <dbReference type="ChEBI" id="CHEBI:16144"/>
        <dbReference type="ChEBI" id="CHEBI:43474"/>
        <dbReference type="ChEBI" id="CHEBI:78533"/>
        <dbReference type="ChEBI" id="CHEBI:78573"/>
        <dbReference type="EC" id="2.9.1.1"/>
    </reaction>
</comment>
<comment type="cofactor">
    <cofactor evidence="1">
        <name>pyridoxal 5'-phosphate</name>
        <dbReference type="ChEBI" id="CHEBI:597326"/>
    </cofactor>
</comment>
<comment type="pathway">
    <text evidence="1">Aminoacyl-tRNA biosynthesis; selenocysteinyl-tRNA(Sec) biosynthesis; selenocysteinyl-tRNA(Sec) from L-seryl-tRNA(Sec) (bacterial route): step 1/1.</text>
</comment>
<comment type="subcellular location">
    <subcellularLocation>
        <location evidence="1">Cytoplasm</location>
    </subcellularLocation>
</comment>
<comment type="similarity">
    <text evidence="1">Belongs to the SelA family.</text>
</comment>
<protein>
    <recommendedName>
        <fullName evidence="1">L-seryl-tRNA(Sec) selenium transferase</fullName>
        <ecNumber evidence="1">2.9.1.1</ecNumber>
    </recommendedName>
    <alternativeName>
        <fullName evidence="1">Selenocysteine synthase</fullName>
        <shortName evidence="1">Sec synthase</shortName>
    </alternativeName>
    <alternativeName>
        <fullName evidence="1">Selenocysteinyl-tRNA(Sec) synthase</fullName>
    </alternativeName>
</protein>
<proteinExistence type="inferred from homology"/>
<reference key="1">
    <citation type="journal article" date="2006" name="J. Bacteriol.">
        <title>Comparative genomic evidence for a close relationship between the dimorphic prosthecate bacteria Hyphomonas neptunium and Caulobacter crescentus.</title>
        <authorList>
            <person name="Badger J.H."/>
            <person name="Hoover T.R."/>
            <person name="Brun Y.V."/>
            <person name="Weiner R.M."/>
            <person name="Laub M.T."/>
            <person name="Alexandre G."/>
            <person name="Mrazek J."/>
            <person name="Ren Q."/>
            <person name="Paulsen I.T."/>
            <person name="Nelson K.E."/>
            <person name="Khouri H.M."/>
            <person name="Radune D."/>
            <person name="Sosa J."/>
            <person name="Dodson R.J."/>
            <person name="Sullivan S.A."/>
            <person name="Rosovitz M.J."/>
            <person name="Madupu R."/>
            <person name="Brinkac L.M."/>
            <person name="Durkin A.S."/>
            <person name="Daugherty S.C."/>
            <person name="Kothari S.P."/>
            <person name="Giglio M.G."/>
            <person name="Zhou L."/>
            <person name="Haft D.H."/>
            <person name="Selengut J.D."/>
            <person name="Davidsen T.M."/>
            <person name="Yang Q."/>
            <person name="Zafar N."/>
            <person name="Ward N.L."/>
        </authorList>
    </citation>
    <scope>NUCLEOTIDE SEQUENCE [LARGE SCALE GENOMIC DNA]</scope>
    <source>
        <strain>ATCC 15444</strain>
    </source>
</reference>